<feature type="chain" id="PRO_0000206732" description="Vesicle-associated membrane protein 4">
    <location>
        <begin position="1"/>
        <end position="141"/>
    </location>
</feature>
<feature type="topological domain" description="Cytoplasmic" evidence="3">
    <location>
        <begin position="1"/>
        <end position="118"/>
    </location>
</feature>
<feature type="transmembrane region" description="Helical; Anchor for type IV membrane protein" evidence="3">
    <location>
        <begin position="119"/>
        <end position="139"/>
    </location>
</feature>
<feature type="topological domain" description="Vesicular" evidence="3">
    <location>
        <begin position="140"/>
        <end position="141"/>
    </location>
</feature>
<feature type="domain" description="v-SNARE coiled-coil homology" evidence="4">
    <location>
        <begin position="52"/>
        <end position="112"/>
    </location>
</feature>
<feature type="region of interest" description="Disordered" evidence="5">
    <location>
        <begin position="1"/>
        <end position="51"/>
    </location>
</feature>
<feature type="site" description="(Microbial infection) Cleavage; by C.botulinum neurotoxin type X (BoNT/X)" evidence="7">
    <location>
        <begin position="87"/>
        <end position="88"/>
    </location>
</feature>
<feature type="modified residue" description="Phosphoserine" evidence="12">
    <location>
        <position position="17"/>
    </location>
</feature>
<feature type="modified residue" description="Phosphoserine" evidence="9 10 11 12 13">
    <location>
        <position position="30"/>
    </location>
</feature>
<feature type="sequence conflict" description="In Ref. 2; BAB27774." evidence="8" ref="2">
    <original>G</original>
    <variation>V</variation>
    <location>
        <position position="113"/>
    </location>
</feature>
<feature type="strand" evidence="14">
    <location>
        <begin position="51"/>
        <end position="53"/>
    </location>
</feature>
<feature type="helix" evidence="14">
    <location>
        <begin position="54"/>
        <end position="57"/>
    </location>
</feature>
<feature type="helix" evidence="14">
    <location>
        <begin position="60"/>
        <end position="109"/>
    </location>
</feature>
<accession>O70480</accession>
<accession>Q9D095</accession>
<name>VAMP4_MOUSE</name>
<comment type="function">
    <text evidence="1">Involved in the pathway that functions to remove an inhibitor (probably synaptotagmin-4) of calcium-triggered exocytosis during the maturation of secretory granules. May be a marker for this sorting pathway that is critical for remodeling the secretory response of granule (By similarity).</text>
</comment>
<comment type="subunit">
    <text evidence="2 6">Identified in a complex containing STX6, STX12, VAMP4 and VTI1A (PubMed:17159904). Interacts with BAIAP3; this interaction is increased in the presence of calcium (By similarity).</text>
</comment>
<comment type="subcellular location">
    <subcellularLocation>
        <location evidence="8">Golgi apparatus</location>
        <location evidence="8">trans-Golgi network membrane</location>
        <topology evidence="8">Single-pass type IV membrane protein</topology>
    </subcellularLocation>
    <text evidence="1">Associated with trans Golgi network (TGN) and newly formed immature secretory granules (ISG). Not found on the mature secretory organelles (By similarity).</text>
</comment>
<comment type="PTM">
    <text evidence="7">(Microbial infection) Targeted and hydrolyzed by C.botulinum neurotoxin type X (BoNT/X) which hydrolyzes the 87-Arg-|-Ser-88 bond and probably inhibits neurotransmitter release (PubMed:28770820). It remains unknown whether BoNT/X is ever produced, or what organisms it targets.</text>
</comment>
<comment type="similarity">
    <text evidence="8">Belongs to the synaptobrevin family.</text>
</comment>
<protein>
    <recommendedName>
        <fullName>Vesicle-associated membrane protein 4</fullName>
        <shortName>VAMP-4</shortName>
    </recommendedName>
</protein>
<reference key="1">
    <citation type="submission" date="1998-04" db="EMBL/GenBank/DDBJ databases">
        <authorList>
            <person name="Zhang T."/>
            <person name="Wong S.H."/>
            <person name="Xu Y."/>
            <person name="Hong W."/>
        </authorList>
    </citation>
    <scope>NUCLEOTIDE SEQUENCE [MRNA]</scope>
</reference>
<reference key="2">
    <citation type="journal article" date="2005" name="Science">
        <title>The transcriptional landscape of the mammalian genome.</title>
        <authorList>
            <person name="Carninci P."/>
            <person name="Kasukawa T."/>
            <person name="Katayama S."/>
            <person name="Gough J."/>
            <person name="Frith M.C."/>
            <person name="Maeda N."/>
            <person name="Oyama R."/>
            <person name="Ravasi T."/>
            <person name="Lenhard B."/>
            <person name="Wells C."/>
            <person name="Kodzius R."/>
            <person name="Shimokawa K."/>
            <person name="Bajic V.B."/>
            <person name="Brenner S.E."/>
            <person name="Batalov S."/>
            <person name="Forrest A.R."/>
            <person name="Zavolan M."/>
            <person name="Davis M.J."/>
            <person name="Wilming L.G."/>
            <person name="Aidinis V."/>
            <person name="Allen J.E."/>
            <person name="Ambesi-Impiombato A."/>
            <person name="Apweiler R."/>
            <person name="Aturaliya R.N."/>
            <person name="Bailey T.L."/>
            <person name="Bansal M."/>
            <person name="Baxter L."/>
            <person name="Beisel K.W."/>
            <person name="Bersano T."/>
            <person name="Bono H."/>
            <person name="Chalk A.M."/>
            <person name="Chiu K.P."/>
            <person name="Choudhary V."/>
            <person name="Christoffels A."/>
            <person name="Clutterbuck D.R."/>
            <person name="Crowe M.L."/>
            <person name="Dalla E."/>
            <person name="Dalrymple B.P."/>
            <person name="de Bono B."/>
            <person name="Della Gatta G."/>
            <person name="di Bernardo D."/>
            <person name="Down T."/>
            <person name="Engstrom P."/>
            <person name="Fagiolini M."/>
            <person name="Faulkner G."/>
            <person name="Fletcher C.F."/>
            <person name="Fukushima T."/>
            <person name="Furuno M."/>
            <person name="Futaki S."/>
            <person name="Gariboldi M."/>
            <person name="Georgii-Hemming P."/>
            <person name="Gingeras T.R."/>
            <person name="Gojobori T."/>
            <person name="Green R.E."/>
            <person name="Gustincich S."/>
            <person name="Harbers M."/>
            <person name="Hayashi Y."/>
            <person name="Hensch T.K."/>
            <person name="Hirokawa N."/>
            <person name="Hill D."/>
            <person name="Huminiecki L."/>
            <person name="Iacono M."/>
            <person name="Ikeo K."/>
            <person name="Iwama A."/>
            <person name="Ishikawa T."/>
            <person name="Jakt M."/>
            <person name="Kanapin A."/>
            <person name="Katoh M."/>
            <person name="Kawasawa Y."/>
            <person name="Kelso J."/>
            <person name="Kitamura H."/>
            <person name="Kitano H."/>
            <person name="Kollias G."/>
            <person name="Krishnan S.P."/>
            <person name="Kruger A."/>
            <person name="Kummerfeld S.K."/>
            <person name="Kurochkin I.V."/>
            <person name="Lareau L.F."/>
            <person name="Lazarevic D."/>
            <person name="Lipovich L."/>
            <person name="Liu J."/>
            <person name="Liuni S."/>
            <person name="McWilliam S."/>
            <person name="Madan Babu M."/>
            <person name="Madera M."/>
            <person name="Marchionni L."/>
            <person name="Matsuda H."/>
            <person name="Matsuzawa S."/>
            <person name="Miki H."/>
            <person name="Mignone F."/>
            <person name="Miyake S."/>
            <person name="Morris K."/>
            <person name="Mottagui-Tabar S."/>
            <person name="Mulder N."/>
            <person name="Nakano N."/>
            <person name="Nakauchi H."/>
            <person name="Ng P."/>
            <person name="Nilsson R."/>
            <person name="Nishiguchi S."/>
            <person name="Nishikawa S."/>
            <person name="Nori F."/>
            <person name="Ohara O."/>
            <person name="Okazaki Y."/>
            <person name="Orlando V."/>
            <person name="Pang K.C."/>
            <person name="Pavan W.J."/>
            <person name="Pavesi G."/>
            <person name="Pesole G."/>
            <person name="Petrovsky N."/>
            <person name="Piazza S."/>
            <person name="Reed J."/>
            <person name="Reid J.F."/>
            <person name="Ring B.Z."/>
            <person name="Ringwald M."/>
            <person name="Rost B."/>
            <person name="Ruan Y."/>
            <person name="Salzberg S.L."/>
            <person name="Sandelin A."/>
            <person name="Schneider C."/>
            <person name="Schoenbach C."/>
            <person name="Sekiguchi K."/>
            <person name="Semple C.A."/>
            <person name="Seno S."/>
            <person name="Sessa L."/>
            <person name="Sheng Y."/>
            <person name="Shibata Y."/>
            <person name="Shimada H."/>
            <person name="Shimada K."/>
            <person name="Silva D."/>
            <person name="Sinclair B."/>
            <person name="Sperling S."/>
            <person name="Stupka E."/>
            <person name="Sugiura K."/>
            <person name="Sultana R."/>
            <person name="Takenaka Y."/>
            <person name="Taki K."/>
            <person name="Tammoja K."/>
            <person name="Tan S.L."/>
            <person name="Tang S."/>
            <person name="Taylor M.S."/>
            <person name="Tegner J."/>
            <person name="Teichmann S.A."/>
            <person name="Ueda H.R."/>
            <person name="van Nimwegen E."/>
            <person name="Verardo R."/>
            <person name="Wei C.L."/>
            <person name="Yagi K."/>
            <person name="Yamanishi H."/>
            <person name="Zabarovsky E."/>
            <person name="Zhu S."/>
            <person name="Zimmer A."/>
            <person name="Hide W."/>
            <person name="Bult C."/>
            <person name="Grimmond S.M."/>
            <person name="Teasdale R.D."/>
            <person name="Liu E.T."/>
            <person name="Brusic V."/>
            <person name="Quackenbush J."/>
            <person name="Wahlestedt C."/>
            <person name="Mattick J.S."/>
            <person name="Hume D.A."/>
            <person name="Kai C."/>
            <person name="Sasaki D."/>
            <person name="Tomaru Y."/>
            <person name="Fukuda S."/>
            <person name="Kanamori-Katayama M."/>
            <person name="Suzuki M."/>
            <person name="Aoki J."/>
            <person name="Arakawa T."/>
            <person name="Iida J."/>
            <person name="Imamura K."/>
            <person name="Itoh M."/>
            <person name="Kato T."/>
            <person name="Kawaji H."/>
            <person name="Kawagashira N."/>
            <person name="Kawashima T."/>
            <person name="Kojima M."/>
            <person name="Kondo S."/>
            <person name="Konno H."/>
            <person name="Nakano K."/>
            <person name="Ninomiya N."/>
            <person name="Nishio T."/>
            <person name="Okada M."/>
            <person name="Plessy C."/>
            <person name="Shibata K."/>
            <person name="Shiraki T."/>
            <person name="Suzuki S."/>
            <person name="Tagami M."/>
            <person name="Waki K."/>
            <person name="Watahiki A."/>
            <person name="Okamura-Oho Y."/>
            <person name="Suzuki H."/>
            <person name="Kawai J."/>
            <person name="Hayashizaki Y."/>
        </authorList>
    </citation>
    <scope>NUCLEOTIDE SEQUENCE [LARGE SCALE MRNA]</scope>
    <source>
        <strain>C57BL/6J</strain>
        <tissue>Cerebellum</tissue>
        <tissue>Embryo</tissue>
    </source>
</reference>
<reference key="3">
    <citation type="journal article" date="2004" name="Mol. Cell. Proteomics">
        <title>Phosphoproteomic analysis of the developing mouse brain.</title>
        <authorList>
            <person name="Ballif B.A."/>
            <person name="Villen J."/>
            <person name="Beausoleil S.A."/>
            <person name="Schwartz D."/>
            <person name="Gygi S.P."/>
        </authorList>
    </citation>
    <scope>PHOSPHORYLATION [LARGE SCALE ANALYSIS] AT SER-30</scope>
    <scope>IDENTIFICATION BY MASS SPECTROMETRY [LARGE SCALE ANALYSIS]</scope>
    <source>
        <tissue>Embryonic brain</tissue>
    </source>
</reference>
<reference key="4">
    <citation type="journal article" date="2007" name="Proc. Natl. Acad. Sci. U.S.A.">
        <title>Large-scale phosphorylation analysis of mouse liver.</title>
        <authorList>
            <person name="Villen J."/>
            <person name="Beausoleil S.A."/>
            <person name="Gerber S.A."/>
            <person name="Gygi S.P."/>
        </authorList>
    </citation>
    <scope>PHOSPHORYLATION [LARGE SCALE ANALYSIS] AT SER-30</scope>
    <scope>IDENTIFICATION BY MASS SPECTROMETRY [LARGE SCALE ANALYSIS]</scope>
    <source>
        <tissue>Liver</tissue>
    </source>
</reference>
<reference key="5">
    <citation type="journal article" date="2008" name="J. Proteome Res.">
        <title>Specific phosphopeptide enrichment with immobilized titanium ion affinity chromatography adsorbent for phosphoproteome analysis.</title>
        <authorList>
            <person name="Zhou H."/>
            <person name="Ye M."/>
            <person name="Dong J."/>
            <person name="Han G."/>
            <person name="Jiang X."/>
            <person name="Wu R."/>
            <person name="Zou H."/>
        </authorList>
    </citation>
    <scope>IDENTIFICATION BY MASS SPECTROMETRY [LARGE SCALE ANALYSIS]</scope>
    <source>
        <tissue>Liver</tissue>
    </source>
</reference>
<reference key="6">
    <citation type="journal article" date="2009" name="Immunity">
        <title>The phagosomal proteome in interferon-gamma-activated macrophages.</title>
        <authorList>
            <person name="Trost M."/>
            <person name="English L."/>
            <person name="Lemieux S."/>
            <person name="Courcelles M."/>
            <person name="Desjardins M."/>
            <person name="Thibault P."/>
        </authorList>
    </citation>
    <scope>PHOSPHORYLATION [LARGE SCALE ANALYSIS] AT SER-17 AND SER-30</scope>
    <scope>IDENTIFICATION BY MASS SPECTROMETRY [LARGE SCALE ANALYSIS]</scope>
</reference>
<reference key="7">
    <citation type="journal article" date="2009" name="Mol. Cell. Proteomics">
        <title>Large scale localization of protein phosphorylation by use of electron capture dissociation mass spectrometry.</title>
        <authorList>
            <person name="Sweet S.M."/>
            <person name="Bailey C.M."/>
            <person name="Cunningham D.L."/>
            <person name="Heath J.K."/>
            <person name="Cooper H.J."/>
        </authorList>
    </citation>
    <scope>PHOSPHORYLATION [LARGE SCALE ANALYSIS] AT SER-30</scope>
    <scope>IDENTIFICATION BY MASS SPECTROMETRY [LARGE SCALE ANALYSIS]</scope>
    <source>
        <tissue>Embryonic fibroblast</tissue>
    </source>
</reference>
<reference key="8">
    <citation type="journal article" date="2010" name="Cell">
        <title>A tissue-specific atlas of mouse protein phosphorylation and expression.</title>
        <authorList>
            <person name="Huttlin E.L."/>
            <person name="Jedrychowski M.P."/>
            <person name="Elias J.E."/>
            <person name="Goswami T."/>
            <person name="Rad R."/>
            <person name="Beausoleil S.A."/>
            <person name="Villen J."/>
            <person name="Haas W."/>
            <person name="Sowa M.E."/>
            <person name="Gygi S.P."/>
        </authorList>
    </citation>
    <scope>PHOSPHORYLATION [LARGE SCALE ANALYSIS] AT SER-30</scope>
    <scope>IDENTIFICATION BY MASS SPECTROMETRY [LARGE SCALE ANALYSIS]</scope>
    <source>
        <tissue>Brain</tissue>
        <tissue>Brown adipose tissue</tissue>
        <tissue>Heart</tissue>
        <tissue>Kidney</tissue>
        <tissue>Liver</tissue>
        <tissue>Lung</tissue>
        <tissue>Pancreas</tissue>
        <tissue>Spleen</tissue>
        <tissue>Testis</tissue>
    </source>
</reference>
<reference key="9">
    <citation type="journal article" date="2007" name="EMBO J.">
        <title>Early endosomal SNAREs form a structurally conserved SNARE complex and fuse liposomes with multiple topologies.</title>
        <authorList>
            <person name="Zwilling D."/>
            <person name="Cypionka A."/>
            <person name="Pohl W.H."/>
            <person name="Fasshauer D."/>
            <person name="Walla P.J."/>
            <person name="Wahl M.C."/>
            <person name="Jahn R."/>
        </authorList>
    </citation>
    <scope>X-RAY CRYSTALLOGRAPHY (2.50 ANGSTROMS) OF 47-117 IN COMPLEX WITH STX12; VTI1A AND STX6</scope>
    <scope>SUBUNIT</scope>
</reference>
<reference key="10">
    <citation type="journal article" date="2017" name="Nat. Commun.">
        <title>Identification and characterization of a novel botulinum neurotoxin.</title>
        <authorList>
            <person name="Zhang S."/>
            <person name="Masuyer G."/>
            <person name="Zhang J."/>
            <person name="Shen Y."/>
            <person name="Lundin D."/>
            <person name="Henriksson L."/>
            <person name="Miyashita S.I."/>
            <person name="Martinez-Carranza M."/>
            <person name="Dong M."/>
            <person name="Stenmark P."/>
        </authorList>
    </citation>
    <scope>PROTEOLYTIC CLEAVAGE (MICROBIAL INFECTION) BY C.BOTULINUM NEUROTOXIN TYPE X</scope>
</reference>
<sequence>MPPKFKRHLNDDDVTGSVKSERRNLLEDDSDEEEDFFLRGPSGPRFGPRNDKIKHVQNQVDEVIDVMQENITKVIERGERLDELQDKSESLSDNATAFSNRSKQLRRQMWWRGCKIKAIMALAAAILLLMIIILIVVKFRT</sequence>
<evidence type="ECO:0000250" key="1"/>
<evidence type="ECO:0000250" key="2">
    <source>
        <dbReference type="UniProtKB" id="O75379"/>
    </source>
</evidence>
<evidence type="ECO:0000255" key="3"/>
<evidence type="ECO:0000255" key="4">
    <source>
        <dbReference type="PROSITE-ProRule" id="PRU00290"/>
    </source>
</evidence>
<evidence type="ECO:0000256" key="5">
    <source>
        <dbReference type="SAM" id="MobiDB-lite"/>
    </source>
</evidence>
<evidence type="ECO:0000269" key="6">
    <source>
    </source>
</evidence>
<evidence type="ECO:0000269" key="7">
    <source>
    </source>
</evidence>
<evidence type="ECO:0000305" key="8"/>
<evidence type="ECO:0007744" key="9">
    <source>
    </source>
</evidence>
<evidence type="ECO:0007744" key="10">
    <source>
    </source>
</evidence>
<evidence type="ECO:0007744" key="11">
    <source>
    </source>
</evidence>
<evidence type="ECO:0007744" key="12">
    <source>
    </source>
</evidence>
<evidence type="ECO:0007744" key="13">
    <source>
    </source>
</evidence>
<evidence type="ECO:0007829" key="14">
    <source>
        <dbReference type="PDB" id="2NPS"/>
    </source>
</evidence>
<proteinExistence type="evidence at protein level"/>
<organism>
    <name type="scientific">Mus musculus</name>
    <name type="common">Mouse</name>
    <dbReference type="NCBI Taxonomy" id="10090"/>
    <lineage>
        <taxon>Eukaryota</taxon>
        <taxon>Metazoa</taxon>
        <taxon>Chordata</taxon>
        <taxon>Craniata</taxon>
        <taxon>Vertebrata</taxon>
        <taxon>Euteleostomi</taxon>
        <taxon>Mammalia</taxon>
        <taxon>Eutheria</taxon>
        <taxon>Euarchontoglires</taxon>
        <taxon>Glires</taxon>
        <taxon>Rodentia</taxon>
        <taxon>Myomorpha</taxon>
        <taxon>Muroidea</taxon>
        <taxon>Muridae</taxon>
        <taxon>Murinae</taxon>
        <taxon>Mus</taxon>
        <taxon>Mus</taxon>
    </lineage>
</organism>
<dbReference type="EMBL" id="AF061516">
    <property type="protein sequence ID" value="AAC15776.1"/>
    <property type="molecule type" value="mRNA"/>
</dbReference>
<dbReference type="EMBL" id="AK011678">
    <property type="protein sequence ID" value="BAB27774.1"/>
    <property type="molecule type" value="mRNA"/>
</dbReference>
<dbReference type="EMBL" id="AK018344">
    <property type="protein sequence ID" value="BAB31171.1"/>
    <property type="molecule type" value="mRNA"/>
</dbReference>
<dbReference type="CCDS" id="CCDS83616.1"/>
<dbReference type="RefSeq" id="NP_001334054.1">
    <property type="nucleotide sequence ID" value="NM_001347125.1"/>
</dbReference>
<dbReference type="RefSeq" id="NP_001343456.1">
    <property type="nucleotide sequence ID" value="NM_001356527.1"/>
</dbReference>
<dbReference type="RefSeq" id="XP_006496997.1">
    <property type="nucleotide sequence ID" value="XM_006496934.2"/>
</dbReference>
<dbReference type="PDB" id="2NPS">
    <property type="method" value="X-ray"/>
    <property type="resolution" value="2.50 A"/>
    <property type="chains" value="A=47-117"/>
</dbReference>
<dbReference type="PDBsum" id="2NPS"/>
<dbReference type="SMR" id="O70480"/>
<dbReference type="BioGRID" id="207290">
    <property type="interactions" value="5"/>
</dbReference>
<dbReference type="FunCoup" id="O70480">
    <property type="interactions" value="1436"/>
</dbReference>
<dbReference type="IntAct" id="O70480">
    <property type="interactions" value="2"/>
</dbReference>
<dbReference type="MINT" id="O70480"/>
<dbReference type="STRING" id="10090.ENSMUSP00000121977"/>
<dbReference type="iPTMnet" id="O70480"/>
<dbReference type="PhosphoSitePlus" id="O70480"/>
<dbReference type="SwissPalm" id="O70480"/>
<dbReference type="jPOST" id="O70480"/>
<dbReference type="PaxDb" id="10090-ENSMUSP00000051544"/>
<dbReference type="PeptideAtlas" id="O70480"/>
<dbReference type="ProteomicsDB" id="297909"/>
<dbReference type="Pumba" id="O70480"/>
<dbReference type="Antibodypedia" id="34381">
    <property type="antibodies" value="258 antibodies from 27 providers"/>
</dbReference>
<dbReference type="DNASU" id="53330"/>
<dbReference type="Ensembl" id="ENSMUST00000135241.8">
    <property type="protein sequence ID" value="ENSMUSP00000116376.2"/>
    <property type="gene ID" value="ENSMUSG00000026696.16"/>
</dbReference>
<dbReference type="Ensembl" id="ENSMUST00000150040.8">
    <property type="protein sequence ID" value="ENSMUSP00000115133.2"/>
    <property type="gene ID" value="ENSMUSG00000026696.16"/>
</dbReference>
<dbReference type="Ensembl" id="ENSMUST00000155003.2">
    <property type="protein sequence ID" value="ENSMUSP00000114172.2"/>
    <property type="gene ID" value="ENSMUSG00000026696.16"/>
</dbReference>
<dbReference type="GeneID" id="53330"/>
<dbReference type="KEGG" id="mmu:53330"/>
<dbReference type="UCSC" id="uc007dgk.1">
    <property type="organism name" value="mouse"/>
</dbReference>
<dbReference type="AGR" id="MGI:1858730"/>
<dbReference type="CTD" id="8674"/>
<dbReference type="MGI" id="MGI:1858730">
    <property type="gene designation" value="Vamp4"/>
</dbReference>
<dbReference type="VEuPathDB" id="HostDB:ENSMUSG00000026696"/>
<dbReference type="eggNOG" id="KOG0860">
    <property type="taxonomic scope" value="Eukaryota"/>
</dbReference>
<dbReference type="GeneTree" id="ENSGT00940000155005"/>
<dbReference type="HOGENOM" id="CLU_149550_0_0_1"/>
<dbReference type="InParanoid" id="O70480"/>
<dbReference type="OMA" id="NHDKASN"/>
<dbReference type="OrthoDB" id="190375at2759"/>
<dbReference type="PhylomeDB" id="O70480"/>
<dbReference type="Reactome" id="R-MMU-6811440">
    <property type="pathway name" value="Retrograde transport at the Trans-Golgi-Network"/>
</dbReference>
<dbReference type="Reactome" id="R-MMU-8856825">
    <property type="pathway name" value="Cargo recognition for clathrin-mediated endocytosis"/>
</dbReference>
<dbReference type="Reactome" id="R-MMU-8856828">
    <property type="pathway name" value="Clathrin-mediated endocytosis"/>
</dbReference>
<dbReference type="BioGRID-ORCS" id="53330">
    <property type="hits" value="2 hits in 61 CRISPR screens"/>
</dbReference>
<dbReference type="ChiTaRS" id="Vamp4">
    <property type="organism name" value="mouse"/>
</dbReference>
<dbReference type="EvolutionaryTrace" id="O70480"/>
<dbReference type="PRO" id="PR:O70480"/>
<dbReference type="Proteomes" id="UP000000589">
    <property type="component" value="Chromosome 1"/>
</dbReference>
<dbReference type="RNAct" id="O70480">
    <property type="molecule type" value="protein"/>
</dbReference>
<dbReference type="Bgee" id="ENSMUSG00000026696">
    <property type="expression patterns" value="Expressed in gastrula and 262 other cell types or tissues"/>
</dbReference>
<dbReference type="ExpressionAtlas" id="O70480">
    <property type="expression patterns" value="baseline and differential"/>
</dbReference>
<dbReference type="GO" id="GO:0009986">
    <property type="term" value="C:cell surface"/>
    <property type="evidence" value="ECO:0007669"/>
    <property type="project" value="Ensembl"/>
</dbReference>
<dbReference type="GO" id="GO:0098978">
    <property type="term" value="C:glutamatergic synapse"/>
    <property type="evidence" value="ECO:0007669"/>
    <property type="project" value="Ensembl"/>
</dbReference>
<dbReference type="GO" id="GO:0005794">
    <property type="term" value="C:Golgi apparatus"/>
    <property type="evidence" value="ECO:0000314"/>
    <property type="project" value="MGI"/>
</dbReference>
<dbReference type="GO" id="GO:0045335">
    <property type="term" value="C:phagocytic vesicle"/>
    <property type="evidence" value="ECO:0000314"/>
    <property type="project" value="MGI"/>
</dbReference>
<dbReference type="GO" id="GO:0098954">
    <property type="term" value="C:presynaptic endosome membrane"/>
    <property type="evidence" value="ECO:0000314"/>
    <property type="project" value="SynGO"/>
</dbReference>
<dbReference type="GO" id="GO:0031201">
    <property type="term" value="C:SNARE complex"/>
    <property type="evidence" value="ECO:0000314"/>
    <property type="project" value="MGI"/>
</dbReference>
<dbReference type="GO" id="GO:0005802">
    <property type="term" value="C:trans-Golgi network"/>
    <property type="evidence" value="ECO:0000314"/>
    <property type="project" value="MGI"/>
</dbReference>
<dbReference type="GO" id="GO:0071346">
    <property type="term" value="P:cellular response to type II interferon"/>
    <property type="evidence" value="ECO:0000314"/>
    <property type="project" value="MGI"/>
</dbReference>
<dbReference type="GO" id="GO:0090161">
    <property type="term" value="P:Golgi ribbon formation"/>
    <property type="evidence" value="ECO:0007669"/>
    <property type="project" value="InterPro"/>
</dbReference>
<dbReference type="GO" id="GO:0043001">
    <property type="term" value="P:Golgi to plasma membrane protein transport"/>
    <property type="evidence" value="ECO:0000315"/>
    <property type="project" value="MGI"/>
</dbReference>
<dbReference type="GO" id="GO:0098887">
    <property type="term" value="P:neurotransmitter receptor transport, endosome to postsynaptic membrane"/>
    <property type="evidence" value="ECO:0007669"/>
    <property type="project" value="Ensembl"/>
</dbReference>
<dbReference type="GO" id="GO:0042996">
    <property type="term" value="P:regulation of Golgi to plasma membrane protein transport"/>
    <property type="evidence" value="ECO:0000315"/>
    <property type="project" value="MGI"/>
</dbReference>
<dbReference type="GO" id="GO:1900242">
    <property type="term" value="P:regulation of synaptic vesicle endocytosis"/>
    <property type="evidence" value="ECO:0007669"/>
    <property type="project" value="Ensembl"/>
</dbReference>
<dbReference type="GO" id="GO:0035493">
    <property type="term" value="P:SNARE complex assembly"/>
    <property type="evidence" value="ECO:0007669"/>
    <property type="project" value="Ensembl"/>
</dbReference>
<dbReference type="GO" id="GO:0016189">
    <property type="term" value="P:synaptic vesicle to endosome fusion"/>
    <property type="evidence" value="ECO:0007669"/>
    <property type="project" value="Ensembl"/>
</dbReference>
<dbReference type="GO" id="GO:0099003">
    <property type="term" value="P:vesicle-mediated transport in synapse"/>
    <property type="evidence" value="ECO:0007669"/>
    <property type="project" value="Ensembl"/>
</dbReference>
<dbReference type="CDD" id="cd15869">
    <property type="entry name" value="R-SNARE_VAMP4"/>
    <property type="match status" value="1"/>
</dbReference>
<dbReference type="DisProt" id="DP01498"/>
<dbReference type="FunFam" id="1.20.5.110:FF:000050">
    <property type="entry name" value="Vesicle-associated membrane protein 4"/>
    <property type="match status" value="1"/>
</dbReference>
<dbReference type="Gene3D" id="1.20.5.110">
    <property type="match status" value="1"/>
</dbReference>
<dbReference type="InterPro" id="IPR001388">
    <property type="entry name" value="Synaptobrevin-like"/>
</dbReference>
<dbReference type="InterPro" id="IPR042855">
    <property type="entry name" value="V_SNARE_CC"/>
</dbReference>
<dbReference type="InterPro" id="IPR042887">
    <property type="entry name" value="VAMP4"/>
</dbReference>
<dbReference type="PANTHER" id="PTHR46897">
    <property type="entry name" value="VESICLE-ASSOCIATED MEMBRANE PROTEIN 4"/>
    <property type="match status" value="1"/>
</dbReference>
<dbReference type="PANTHER" id="PTHR46897:SF1">
    <property type="entry name" value="VESICLE-ASSOCIATED MEMBRANE PROTEIN 4"/>
    <property type="match status" value="1"/>
</dbReference>
<dbReference type="Pfam" id="PF00957">
    <property type="entry name" value="Synaptobrevin"/>
    <property type="match status" value="1"/>
</dbReference>
<dbReference type="PRINTS" id="PR00219">
    <property type="entry name" value="SYNAPTOBREVN"/>
</dbReference>
<dbReference type="SUPFAM" id="SSF58038">
    <property type="entry name" value="SNARE fusion complex"/>
    <property type="match status" value="1"/>
</dbReference>
<dbReference type="PROSITE" id="PS00417">
    <property type="entry name" value="SYNAPTOBREVIN"/>
    <property type="match status" value="1"/>
</dbReference>
<dbReference type="PROSITE" id="PS50892">
    <property type="entry name" value="V_SNARE"/>
    <property type="match status" value="1"/>
</dbReference>
<gene>
    <name type="primary">Vamp4</name>
</gene>
<keyword id="KW-0002">3D-structure</keyword>
<keyword id="KW-0175">Coiled coil</keyword>
<keyword id="KW-0333">Golgi apparatus</keyword>
<keyword id="KW-0472">Membrane</keyword>
<keyword id="KW-0597">Phosphoprotein</keyword>
<keyword id="KW-1185">Reference proteome</keyword>
<keyword id="KW-0812">Transmembrane</keyword>
<keyword id="KW-1133">Transmembrane helix</keyword>